<reference key="1">
    <citation type="journal article" date="2006" name="Proc. Natl. Acad. Sci. U.S.A.">
        <title>Genome reduction in Leptospira borgpetersenii reflects limited transmission potential.</title>
        <authorList>
            <person name="Bulach D.M."/>
            <person name="Zuerner R.L."/>
            <person name="Wilson P."/>
            <person name="Seemann T."/>
            <person name="McGrath A."/>
            <person name="Cullen P.A."/>
            <person name="Davis J."/>
            <person name="Johnson M."/>
            <person name="Kuczek E."/>
            <person name="Alt D.P."/>
            <person name="Peterson-Burch B."/>
            <person name="Coppel R.L."/>
            <person name="Rood J.I."/>
            <person name="Davies J.K."/>
            <person name="Adler B."/>
        </authorList>
    </citation>
    <scope>NUCLEOTIDE SEQUENCE [LARGE SCALE GENOMIC DNA]</scope>
    <source>
        <strain>JB197</strain>
    </source>
</reference>
<organism>
    <name type="scientific">Leptospira borgpetersenii serovar Hardjo-bovis (strain JB197)</name>
    <dbReference type="NCBI Taxonomy" id="355277"/>
    <lineage>
        <taxon>Bacteria</taxon>
        <taxon>Pseudomonadati</taxon>
        <taxon>Spirochaetota</taxon>
        <taxon>Spirochaetia</taxon>
        <taxon>Leptospirales</taxon>
        <taxon>Leptospiraceae</taxon>
        <taxon>Leptospira</taxon>
    </lineage>
</organism>
<keyword id="KW-0067">ATP-binding</keyword>
<keyword id="KW-0963">Cytoplasm</keyword>
<keyword id="KW-0436">Ligase</keyword>
<keyword id="KW-0547">Nucleotide-binding</keyword>
<keyword id="KW-0566">Pantothenate biosynthesis</keyword>
<feature type="chain" id="PRO_0000305472" description="Pantothenate synthetase">
    <location>
        <begin position="1"/>
        <end position="285"/>
    </location>
</feature>
<feature type="active site" description="Proton donor" evidence="1">
    <location>
        <position position="37"/>
    </location>
</feature>
<feature type="binding site" evidence="1">
    <location>
        <begin position="30"/>
        <end position="37"/>
    </location>
    <ligand>
        <name>ATP</name>
        <dbReference type="ChEBI" id="CHEBI:30616"/>
    </ligand>
</feature>
<feature type="binding site" evidence="1">
    <location>
        <position position="61"/>
    </location>
    <ligand>
        <name>(R)-pantoate</name>
        <dbReference type="ChEBI" id="CHEBI:15980"/>
    </ligand>
</feature>
<feature type="binding site" evidence="1">
    <location>
        <position position="61"/>
    </location>
    <ligand>
        <name>beta-alanine</name>
        <dbReference type="ChEBI" id="CHEBI:57966"/>
    </ligand>
</feature>
<feature type="binding site" evidence="1">
    <location>
        <begin position="148"/>
        <end position="151"/>
    </location>
    <ligand>
        <name>ATP</name>
        <dbReference type="ChEBI" id="CHEBI:30616"/>
    </ligand>
</feature>
<feature type="binding site" evidence="1">
    <location>
        <position position="154"/>
    </location>
    <ligand>
        <name>(R)-pantoate</name>
        <dbReference type="ChEBI" id="CHEBI:15980"/>
    </ligand>
</feature>
<feature type="binding site" evidence="1">
    <location>
        <position position="177"/>
    </location>
    <ligand>
        <name>ATP</name>
        <dbReference type="ChEBI" id="CHEBI:30616"/>
    </ligand>
</feature>
<feature type="binding site" evidence="1">
    <location>
        <begin position="185"/>
        <end position="188"/>
    </location>
    <ligand>
        <name>ATP</name>
        <dbReference type="ChEBI" id="CHEBI:30616"/>
    </ligand>
</feature>
<name>PANC_LEPBJ</name>
<comment type="function">
    <text evidence="1">Catalyzes the condensation of pantoate with beta-alanine in an ATP-dependent reaction via a pantoyl-adenylate intermediate.</text>
</comment>
<comment type="catalytic activity">
    <reaction evidence="1">
        <text>(R)-pantoate + beta-alanine + ATP = (R)-pantothenate + AMP + diphosphate + H(+)</text>
        <dbReference type="Rhea" id="RHEA:10912"/>
        <dbReference type="ChEBI" id="CHEBI:15378"/>
        <dbReference type="ChEBI" id="CHEBI:15980"/>
        <dbReference type="ChEBI" id="CHEBI:29032"/>
        <dbReference type="ChEBI" id="CHEBI:30616"/>
        <dbReference type="ChEBI" id="CHEBI:33019"/>
        <dbReference type="ChEBI" id="CHEBI:57966"/>
        <dbReference type="ChEBI" id="CHEBI:456215"/>
        <dbReference type="EC" id="6.3.2.1"/>
    </reaction>
</comment>
<comment type="pathway">
    <text evidence="1">Cofactor biosynthesis; (R)-pantothenate biosynthesis; (R)-pantothenate from (R)-pantoate and beta-alanine: step 1/1.</text>
</comment>
<comment type="subunit">
    <text evidence="1">Homodimer.</text>
</comment>
<comment type="subcellular location">
    <subcellularLocation>
        <location evidence="1">Cytoplasm</location>
    </subcellularLocation>
</comment>
<comment type="miscellaneous">
    <text evidence="1">The reaction proceeds by a bi uni uni bi ping pong mechanism.</text>
</comment>
<comment type="similarity">
    <text evidence="1">Belongs to the pantothenate synthetase family.</text>
</comment>
<proteinExistence type="inferred from homology"/>
<evidence type="ECO:0000255" key="1">
    <source>
        <dbReference type="HAMAP-Rule" id="MF_00158"/>
    </source>
</evidence>
<protein>
    <recommendedName>
        <fullName evidence="1">Pantothenate synthetase</fullName>
        <shortName evidence="1">PS</shortName>
        <ecNumber evidence="1">6.3.2.1</ecNumber>
    </recommendedName>
    <alternativeName>
        <fullName evidence="1">Pantoate--beta-alanine ligase</fullName>
    </alternativeName>
    <alternativeName>
        <fullName evidence="1">Pantoate-activating enzyme</fullName>
    </alternativeName>
</protein>
<accession>Q04S98</accession>
<dbReference type="EC" id="6.3.2.1" evidence="1"/>
<dbReference type="EMBL" id="CP000350">
    <property type="protein sequence ID" value="ABJ76222.1"/>
    <property type="molecule type" value="Genomic_DNA"/>
</dbReference>
<dbReference type="RefSeq" id="WP_002755097.1">
    <property type="nucleotide sequence ID" value="NC_008510.1"/>
</dbReference>
<dbReference type="SMR" id="Q04S98"/>
<dbReference type="KEGG" id="lbj:LBJ_1667"/>
<dbReference type="HOGENOM" id="CLU_047148_0_0_12"/>
<dbReference type="UniPathway" id="UPA00028">
    <property type="reaction ID" value="UER00005"/>
</dbReference>
<dbReference type="Proteomes" id="UP000000656">
    <property type="component" value="Chromosome 1"/>
</dbReference>
<dbReference type="GO" id="GO:0005829">
    <property type="term" value="C:cytosol"/>
    <property type="evidence" value="ECO:0007669"/>
    <property type="project" value="TreeGrafter"/>
</dbReference>
<dbReference type="GO" id="GO:0005524">
    <property type="term" value="F:ATP binding"/>
    <property type="evidence" value="ECO:0007669"/>
    <property type="project" value="UniProtKB-KW"/>
</dbReference>
<dbReference type="GO" id="GO:0004592">
    <property type="term" value="F:pantoate-beta-alanine ligase activity"/>
    <property type="evidence" value="ECO:0007669"/>
    <property type="project" value="UniProtKB-UniRule"/>
</dbReference>
<dbReference type="GO" id="GO:0015940">
    <property type="term" value="P:pantothenate biosynthetic process"/>
    <property type="evidence" value="ECO:0007669"/>
    <property type="project" value="UniProtKB-UniRule"/>
</dbReference>
<dbReference type="CDD" id="cd00560">
    <property type="entry name" value="PanC"/>
    <property type="match status" value="1"/>
</dbReference>
<dbReference type="FunFam" id="3.40.50.620:FF:000114">
    <property type="entry name" value="Pantothenate synthetase"/>
    <property type="match status" value="1"/>
</dbReference>
<dbReference type="Gene3D" id="3.40.50.620">
    <property type="entry name" value="HUPs"/>
    <property type="match status" value="1"/>
</dbReference>
<dbReference type="Gene3D" id="3.30.1300.10">
    <property type="entry name" value="Pantoate-beta-alanine ligase, C-terminal domain"/>
    <property type="match status" value="1"/>
</dbReference>
<dbReference type="HAMAP" id="MF_00158">
    <property type="entry name" value="PanC"/>
    <property type="match status" value="1"/>
</dbReference>
<dbReference type="InterPro" id="IPR004821">
    <property type="entry name" value="Cyt_trans-like"/>
</dbReference>
<dbReference type="InterPro" id="IPR003721">
    <property type="entry name" value="Pantoate_ligase"/>
</dbReference>
<dbReference type="InterPro" id="IPR042176">
    <property type="entry name" value="Pantoate_ligase_C"/>
</dbReference>
<dbReference type="InterPro" id="IPR014729">
    <property type="entry name" value="Rossmann-like_a/b/a_fold"/>
</dbReference>
<dbReference type="NCBIfam" id="TIGR00125">
    <property type="entry name" value="cyt_tran_rel"/>
    <property type="match status" value="1"/>
</dbReference>
<dbReference type="NCBIfam" id="TIGR00018">
    <property type="entry name" value="panC"/>
    <property type="match status" value="1"/>
</dbReference>
<dbReference type="PANTHER" id="PTHR21299">
    <property type="entry name" value="CYTIDYLATE KINASE/PANTOATE-BETA-ALANINE LIGASE"/>
    <property type="match status" value="1"/>
</dbReference>
<dbReference type="PANTHER" id="PTHR21299:SF1">
    <property type="entry name" value="PANTOATE--BETA-ALANINE LIGASE"/>
    <property type="match status" value="1"/>
</dbReference>
<dbReference type="Pfam" id="PF02569">
    <property type="entry name" value="Pantoate_ligase"/>
    <property type="match status" value="1"/>
</dbReference>
<dbReference type="SUPFAM" id="SSF52374">
    <property type="entry name" value="Nucleotidylyl transferase"/>
    <property type="match status" value="1"/>
</dbReference>
<gene>
    <name evidence="1" type="primary">panC</name>
    <name type="ordered locus">LBJ_1667</name>
</gene>
<sequence length="285" mass="32038">MIICRTPEEISVQVRRWKAEDKKVGFVPTMGYLHEGHASLFRECLSKADKTVVSIFVNPAQFNDPEDYAKYPINTDGDLKICESGKVDLVFLPEKETIYPEGIPNVVLQVPHLMRNLCAVSRPGHFEGVLLVISRLFHFVKPDFAFFGKKDYQQYLLVKEFCKILAFPVEVIGCETIRSDKGLALSSRNSRLSEDEKEESLLISRALKLGEAQILSGIKDPVVVRDIMKDVLDSSPKIRLDYLEVLNADTLESLEILEGNILLAAAVFIGSVRLIDNRTLRVASV</sequence>